<protein>
    <recommendedName>
        <fullName>Glutamate decarboxylase 1</fullName>
        <ecNumber evidence="2">4.1.1.15</ecNumber>
    </recommendedName>
    <alternativeName>
        <fullName>67 kDa glutamic acid decarboxylase</fullName>
        <shortName>GAD-67</shortName>
    </alternativeName>
    <alternativeName>
        <fullName>Glutamate decarboxylase 67 kDa isoform</fullName>
    </alternativeName>
</protein>
<comment type="function">
    <text evidence="2">Catalyzes the synthesis of the inhibitory neurotransmitter gamma-aminobutyric acid (GABA) with pyridoxal 5'-phosphate as cofactor.</text>
</comment>
<comment type="catalytic activity">
    <reaction evidence="2">
        <text>L-glutamate + H(+) = 4-aminobutanoate + CO2</text>
        <dbReference type="Rhea" id="RHEA:17785"/>
        <dbReference type="ChEBI" id="CHEBI:15378"/>
        <dbReference type="ChEBI" id="CHEBI:16526"/>
        <dbReference type="ChEBI" id="CHEBI:29985"/>
        <dbReference type="ChEBI" id="CHEBI:59888"/>
        <dbReference type="EC" id="4.1.1.15"/>
    </reaction>
    <physiologicalReaction direction="left-to-right" evidence="2">
        <dbReference type="Rhea" id="RHEA:17786"/>
    </physiologicalReaction>
</comment>
<comment type="cofactor">
    <cofactor evidence="2">
        <name>pyridoxal 5'-phosphate</name>
        <dbReference type="ChEBI" id="CHEBI:597326"/>
    </cofactor>
</comment>
<comment type="subunit">
    <text evidence="2">Homodimer.</text>
</comment>
<comment type="similarity">
    <text evidence="4">Belongs to the group II decarboxylase family.</text>
</comment>
<accession>P48319</accession>
<sequence>MASSTPSSSATSSNAGPDPNTTNLRPTTYDTWCGVAHGCTRKLGLKICGFLQRTNSLEEKSRLVSAFKERQSSKNLLSCENSDRDGRFRRTETDFSNLFARDLLPAKNGEEQTVQFLLEVVDILLNYVRKTFDRSTKVLDFHHPHQLLEGMEGFNLELSDHPESLEQILVDCRDTLKYGVRTGHPRFFNQLSTGLDIIGLAGEWLTSTANTNMFTYEIAPVFVLMEQITLKKMREIVGWSNKDGDGIFSPGGAISNMYSIMAARYKYFPEVKTKGMAAVPKLVLFTSEHSHYSIKKAGAALGFGTDNVILIKCNERGKIIPADLEAKILEAKQKGYIPLYVNATAGTTVYGAFDPIQEIADICEKYNLWLHVDAAWGGGLLMSRKHRHKLSGIERADSVTWNPHKMMGVLLQCSAILVKEKGILQGCNQMCAGYLFQPDKQYDVSYDTGDKAIQCGRHVDIFKFWLMWKAKGTVGFENQINKCLELAEYLYAKIKNREEFEMVFDGEPEHTNVCFWYIPQSLRGVPDSPERREKLHRVAPKIKALMMESGTTMVGYQPQGDKANFFRMVISNPAATQSDIDFLIEEIERLGQDL</sequence>
<evidence type="ECO:0000250" key="1">
    <source>
        <dbReference type="UniProtKB" id="P48318"/>
    </source>
</evidence>
<evidence type="ECO:0000250" key="2">
    <source>
        <dbReference type="UniProtKB" id="Q99259"/>
    </source>
</evidence>
<evidence type="ECO:0000256" key="3">
    <source>
        <dbReference type="SAM" id="MobiDB-lite"/>
    </source>
</evidence>
<evidence type="ECO:0000305" key="4"/>
<feature type="chain" id="PRO_0000146966" description="Glutamate decarboxylase 1">
    <location>
        <begin position="1"/>
        <end position="594"/>
    </location>
</feature>
<feature type="region of interest" description="Disordered" evidence="3">
    <location>
        <begin position="1"/>
        <end position="25"/>
    </location>
</feature>
<feature type="compositionally biased region" description="Low complexity" evidence="3">
    <location>
        <begin position="1"/>
        <end position="13"/>
    </location>
</feature>
<feature type="binding site" evidence="2">
    <location>
        <begin position="190"/>
        <end position="192"/>
    </location>
    <ligand>
        <name>4-aminobutanoate</name>
        <dbReference type="ChEBI" id="CHEBI:59888"/>
    </ligand>
</feature>
<feature type="binding site" evidence="2">
    <location>
        <position position="567"/>
    </location>
    <ligand>
        <name>4-aminobutanoate</name>
        <dbReference type="ChEBI" id="CHEBI:59888"/>
    </ligand>
</feature>
<feature type="modified residue" description="Phosphoserine" evidence="1">
    <location>
        <position position="78"/>
    </location>
</feature>
<feature type="modified residue" description="N6-(pyridoxal phosphate)lysine" evidence="2">
    <location>
        <position position="405"/>
    </location>
</feature>
<proteinExistence type="evidence at transcript level"/>
<dbReference type="EC" id="4.1.1.15" evidence="2"/>
<dbReference type="EMBL" id="D31849">
    <property type="protein sequence ID" value="BAA06636.1"/>
    <property type="molecule type" value="mRNA"/>
</dbReference>
<dbReference type="PIR" id="JC4065">
    <property type="entry name" value="JC4065"/>
</dbReference>
<dbReference type="RefSeq" id="NP_999059.1">
    <property type="nucleotide sequence ID" value="NM_213894.1"/>
</dbReference>
<dbReference type="SMR" id="P48319"/>
<dbReference type="FunCoup" id="P48319">
    <property type="interactions" value="378"/>
</dbReference>
<dbReference type="STRING" id="9823.ENSSSCP00000041776"/>
<dbReference type="PaxDb" id="9823-ENSSSCP00000023541"/>
<dbReference type="PeptideAtlas" id="P48319"/>
<dbReference type="Ensembl" id="ENSSSCT00015079812.1">
    <property type="protein sequence ID" value="ENSSSCP00015032241.1"/>
    <property type="gene ID" value="ENSSSCG00015059664.1"/>
</dbReference>
<dbReference type="Ensembl" id="ENSSSCT00070049047.1">
    <property type="protein sequence ID" value="ENSSSCP00070041424.1"/>
    <property type="gene ID" value="ENSSSCG00070024572.1"/>
</dbReference>
<dbReference type="Ensembl" id="ENSSSCT00070049050.1">
    <property type="protein sequence ID" value="ENSSSCP00070041427.1"/>
    <property type="gene ID" value="ENSSSCG00070024572.1"/>
</dbReference>
<dbReference type="Ensembl" id="ENSSSCT00115000419">
    <property type="protein sequence ID" value="ENSSSCP00115000368"/>
    <property type="gene ID" value="ENSSSCG00115000311"/>
</dbReference>
<dbReference type="GeneID" id="396928"/>
<dbReference type="KEGG" id="ssc:396928"/>
<dbReference type="CTD" id="2571"/>
<dbReference type="eggNOG" id="KOG0629">
    <property type="taxonomic scope" value="Eukaryota"/>
</dbReference>
<dbReference type="HOGENOM" id="CLU_011856_0_0_1"/>
<dbReference type="InParanoid" id="P48319"/>
<dbReference type="OrthoDB" id="392571at2759"/>
<dbReference type="TreeFam" id="TF314688"/>
<dbReference type="Reactome" id="R-SSC-888568">
    <property type="pathway name" value="GABA synthesis"/>
</dbReference>
<dbReference type="Reactome" id="R-SSC-888590">
    <property type="pathway name" value="GABA synthesis, release, reuptake and degradation"/>
</dbReference>
<dbReference type="Proteomes" id="UP000008227">
    <property type="component" value="Unplaced"/>
</dbReference>
<dbReference type="Proteomes" id="UP000314985">
    <property type="component" value="Chromosome 15"/>
</dbReference>
<dbReference type="Proteomes" id="UP000694570">
    <property type="component" value="Unplaced"/>
</dbReference>
<dbReference type="Proteomes" id="UP000694571">
    <property type="component" value="Unplaced"/>
</dbReference>
<dbReference type="Proteomes" id="UP000694720">
    <property type="component" value="Unplaced"/>
</dbReference>
<dbReference type="Proteomes" id="UP000694722">
    <property type="component" value="Unplaced"/>
</dbReference>
<dbReference type="Proteomes" id="UP000694723">
    <property type="component" value="Unplaced"/>
</dbReference>
<dbReference type="Proteomes" id="UP000694724">
    <property type="component" value="Unplaced"/>
</dbReference>
<dbReference type="Proteomes" id="UP000694725">
    <property type="component" value="Unplaced"/>
</dbReference>
<dbReference type="Proteomes" id="UP000694726">
    <property type="component" value="Unplaced"/>
</dbReference>
<dbReference type="Proteomes" id="UP000694727">
    <property type="component" value="Unplaced"/>
</dbReference>
<dbReference type="Proteomes" id="UP000694728">
    <property type="component" value="Unplaced"/>
</dbReference>
<dbReference type="GO" id="GO:0005737">
    <property type="term" value="C:cytoplasm"/>
    <property type="evidence" value="ECO:0000318"/>
    <property type="project" value="GO_Central"/>
</dbReference>
<dbReference type="GO" id="GO:0048786">
    <property type="term" value="C:presynaptic active zone"/>
    <property type="evidence" value="ECO:0000318"/>
    <property type="project" value="GO_Central"/>
</dbReference>
<dbReference type="GO" id="GO:0004351">
    <property type="term" value="F:glutamate decarboxylase activity"/>
    <property type="evidence" value="ECO:0000250"/>
    <property type="project" value="UniProtKB"/>
</dbReference>
<dbReference type="GO" id="GO:0042802">
    <property type="term" value="F:identical protein binding"/>
    <property type="evidence" value="ECO:0000250"/>
    <property type="project" value="UniProtKB"/>
</dbReference>
<dbReference type="GO" id="GO:0030170">
    <property type="term" value="F:pyridoxal phosphate binding"/>
    <property type="evidence" value="ECO:0007669"/>
    <property type="project" value="InterPro"/>
</dbReference>
<dbReference type="GO" id="GO:0009449">
    <property type="term" value="P:gamma-aminobutyric acid biosynthetic process"/>
    <property type="evidence" value="ECO:0000250"/>
    <property type="project" value="UniProtKB"/>
</dbReference>
<dbReference type="GO" id="GO:0006538">
    <property type="term" value="P:glutamate catabolic process"/>
    <property type="evidence" value="ECO:0000250"/>
    <property type="project" value="UniProtKB"/>
</dbReference>
<dbReference type="CDD" id="cd06450">
    <property type="entry name" value="DOPA_deC_like"/>
    <property type="match status" value="1"/>
</dbReference>
<dbReference type="FunFam" id="3.90.1150.170:FF:000003">
    <property type="entry name" value="Glutamate decarboxylase 1"/>
    <property type="match status" value="1"/>
</dbReference>
<dbReference type="FunFam" id="3.40.640.10:FF:000016">
    <property type="entry name" value="Glutamate decarboxylase like 1"/>
    <property type="match status" value="1"/>
</dbReference>
<dbReference type="Gene3D" id="3.90.1150.170">
    <property type="match status" value="1"/>
</dbReference>
<dbReference type="Gene3D" id="3.40.640.10">
    <property type="entry name" value="Type I PLP-dependent aspartate aminotransferase-like (Major domain)"/>
    <property type="match status" value="1"/>
</dbReference>
<dbReference type="InterPro" id="IPR002129">
    <property type="entry name" value="PyrdxlP-dep_de-COase"/>
</dbReference>
<dbReference type="InterPro" id="IPR015424">
    <property type="entry name" value="PyrdxlP-dep_Trfase"/>
</dbReference>
<dbReference type="InterPro" id="IPR015421">
    <property type="entry name" value="PyrdxlP-dep_Trfase_major"/>
</dbReference>
<dbReference type="InterPro" id="IPR021115">
    <property type="entry name" value="Pyridoxal-P_BS"/>
</dbReference>
<dbReference type="PANTHER" id="PTHR45677:SF5">
    <property type="entry name" value="GLUTAMATE DECARBOXYLASE 1"/>
    <property type="match status" value="1"/>
</dbReference>
<dbReference type="PANTHER" id="PTHR45677">
    <property type="entry name" value="GLUTAMATE DECARBOXYLASE-RELATED"/>
    <property type="match status" value="1"/>
</dbReference>
<dbReference type="Pfam" id="PF00282">
    <property type="entry name" value="Pyridoxal_deC"/>
    <property type="match status" value="1"/>
</dbReference>
<dbReference type="SUPFAM" id="SSF53383">
    <property type="entry name" value="PLP-dependent transferases"/>
    <property type="match status" value="1"/>
</dbReference>
<dbReference type="PROSITE" id="PS00392">
    <property type="entry name" value="DDC_GAD_HDC_YDC"/>
    <property type="match status" value="1"/>
</dbReference>
<organism>
    <name type="scientific">Sus scrofa</name>
    <name type="common">Pig</name>
    <dbReference type="NCBI Taxonomy" id="9823"/>
    <lineage>
        <taxon>Eukaryota</taxon>
        <taxon>Metazoa</taxon>
        <taxon>Chordata</taxon>
        <taxon>Craniata</taxon>
        <taxon>Vertebrata</taxon>
        <taxon>Euteleostomi</taxon>
        <taxon>Mammalia</taxon>
        <taxon>Eutheria</taxon>
        <taxon>Laurasiatheria</taxon>
        <taxon>Artiodactyla</taxon>
        <taxon>Suina</taxon>
        <taxon>Suidae</taxon>
        <taxon>Sus</taxon>
    </lineage>
</organism>
<name>DCE1_PIG</name>
<gene>
    <name type="primary">GAD1</name>
    <name type="synonym">GAD67</name>
</gene>
<reference key="1">
    <citation type="journal article" date="1995" name="Gene">
        <title>Sequences of two porcine glutamic acid decarboxylases (65- and 67-kDa GAD).</title>
        <authorList>
            <person name="Suzuki R."/>
            <person name="Asami N."/>
            <person name="Amann E."/>
            <person name="Wagatsuma M."/>
        </authorList>
    </citation>
    <scope>NUCLEOTIDE SEQUENCE [MRNA]</scope>
    <source>
        <tissue>Brain</tissue>
    </source>
</reference>
<keyword id="KW-0210">Decarboxylase</keyword>
<keyword id="KW-0456">Lyase</keyword>
<keyword id="KW-0530">Neurotransmitter biosynthesis</keyword>
<keyword id="KW-0597">Phosphoprotein</keyword>
<keyword id="KW-0663">Pyridoxal phosphate</keyword>
<keyword id="KW-1185">Reference proteome</keyword>